<evidence type="ECO:0000255" key="1">
    <source>
        <dbReference type="HAMAP-Rule" id="MF_01077"/>
    </source>
</evidence>
<proteinExistence type="inferred from homology"/>
<feature type="chain" id="PRO_0000181902" description="Ribosome maturation factor RimP">
    <location>
        <begin position="1"/>
        <end position="155"/>
    </location>
</feature>
<gene>
    <name evidence="1" type="primary">rimP</name>
    <name type="ordered locus">Pro_1646</name>
</gene>
<accession>Q7VA23</accession>
<name>RIMP_PROMA</name>
<keyword id="KW-0963">Cytoplasm</keyword>
<keyword id="KW-1185">Reference proteome</keyword>
<keyword id="KW-0690">Ribosome biogenesis</keyword>
<protein>
    <recommendedName>
        <fullName evidence="1">Ribosome maturation factor RimP</fullName>
    </recommendedName>
</protein>
<comment type="function">
    <text evidence="1">Required for maturation of 30S ribosomal subunits.</text>
</comment>
<comment type="subcellular location">
    <subcellularLocation>
        <location evidence="1">Cytoplasm</location>
    </subcellularLocation>
</comment>
<comment type="similarity">
    <text evidence="1">Belongs to the RimP family.</text>
</comment>
<sequence>MQKHIVKDLELLAANAAAKEGFEIIRLEVLAQMKPMKIQLQIRHKNGSDVSLEDCSRLSRPIGEVIENSKLINQSYILEISSPGLSDILETDKEFATFKGFPIQVSTKNKSNSTILQNGLLHTKSKEHLLINIKGKMSKIPIDNVIQVRLASPTD</sequence>
<organism>
    <name type="scientific">Prochlorococcus marinus (strain SARG / CCMP1375 / SS120)</name>
    <dbReference type="NCBI Taxonomy" id="167539"/>
    <lineage>
        <taxon>Bacteria</taxon>
        <taxon>Bacillati</taxon>
        <taxon>Cyanobacteriota</taxon>
        <taxon>Cyanophyceae</taxon>
        <taxon>Synechococcales</taxon>
        <taxon>Prochlorococcaceae</taxon>
        <taxon>Prochlorococcus</taxon>
    </lineage>
</organism>
<dbReference type="EMBL" id="AE017126">
    <property type="protein sequence ID" value="AAQ00690.1"/>
    <property type="molecule type" value="Genomic_DNA"/>
</dbReference>
<dbReference type="RefSeq" id="NP_876037.1">
    <property type="nucleotide sequence ID" value="NC_005042.1"/>
</dbReference>
<dbReference type="RefSeq" id="WP_011125796.1">
    <property type="nucleotide sequence ID" value="NC_005042.1"/>
</dbReference>
<dbReference type="SMR" id="Q7VA23"/>
<dbReference type="STRING" id="167539.Pro_1646"/>
<dbReference type="EnsemblBacteria" id="AAQ00690">
    <property type="protein sequence ID" value="AAQ00690"/>
    <property type="gene ID" value="Pro_1646"/>
</dbReference>
<dbReference type="KEGG" id="pma:Pro_1646"/>
<dbReference type="PATRIC" id="fig|167539.5.peg.1741"/>
<dbReference type="eggNOG" id="COG0779">
    <property type="taxonomic scope" value="Bacteria"/>
</dbReference>
<dbReference type="HOGENOM" id="CLU_070525_2_1_3"/>
<dbReference type="OrthoDB" id="9805006at2"/>
<dbReference type="Proteomes" id="UP000001420">
    <property type="component" value="Chromosome"/>
</dbReference>
<dbReference type="GO" id="GO:0005829">
    <property type="term" value="C:cytosol"/>
    <property type="evidence" value="ECO:0007669"/>
    <property type="project" value="TreeGrafter"/>
</dbReference>
<dbReference type="GO" id="GO:0000028">
    <property type="term" value="P:ribosomal small subunit assembly"/>
    <property type="evidence" value="ECO:0007669"/>
    <property type="project" value="TreeGrafter"/>
</dbReference>
<dbReference type="GO" id="GO:0006412">
    <property type="term" value="P:translation"/>
    <property type="evidence" value="ECO:0007669"/>
    <property type="project" value="TreeGrafter"/>
</dbReference>
<dbReference type="Gene3D" id="3.30.300.70">
    <property type="entry name" value="RimP-like superfamily, N-terminal"/>
    <property type="match status" value="1"/>
</dbReference>
<dbReference type="HAMAP" id="MF_01077">
    <property type="entry name" value="RimP"/>
    <property type="match status" value="1"/>
</dbReference>
<dbReference type="InterPro" id="IPR003728">
    <property type="entry name" value="Ribosome_maturation_RimP"/>
</dbReference>
<dbReference type="InterPro" id="IPR036847">
    <property type="entry name" value="RimP_C_sf"/>
</dbReference>
<dbReference type="InterPro" id="IPR028989">
    <property type="entry name" value="RimP_N"/>
</dbReference>
<dbReference type="InterPro" id="IPR035956">
    <property type="entry name" value="RimP_N_sf"/>
</dbReference>
<dbReference type="PANTHER" id="PTHR33867">
    <property type="entry name" value="RIBOSOME MATURATION FACTOR RIMP"/>
    <property type="match status" value="1"/>
</dbReference>
<dbReference type="PANTHER" id="PTHR33867:SF1">
    <property type="entry name" value="RIBOSOME MATURATION FACTOR RIMP"/>
    <property type="match status" value="1"/>
</dbReference>
<dbReference type="Pfam" id="PF02576">
    <property type="entry name" value="RimP_N"/>
    <property type="match status" value="1"/>
</dbReference>
<dbReference type="SUPFAM" id="SSF74942">
    <property type="entry name" value="YhbC-like, C-terminal domain"/>
    <property type="match status" value="1"/>
</dbReference>
<dbReference type="SUPFAM" id="SSF75420">
    <property type="entry name" value="YhbC-like, N-terminal domain"/>
    <property type="match status" value="1"/>
</dbReference>
<reference key="1">
    <citation type="journal article" date="2003" name="Proc. Natl. Acad. Sci. U.S.A.">
        <title>Genome sequence of the cyanobacterium Prochlorococcus marinus SS120, a nearly minimal oxyphototrophic genome.</title>
        <authorList>
            <person name="Dufresne A."/>
            <person name="Salanoubat M."/>
            <person name="Partensky F."/>
            <person name="Artiguenave F."/>
            <person name="Axmann I.M."/>
            <person name="Barbe V."/>
            <person name="Duprat S."/>
            <person name="Galperin M.Y."/>
            <person name="Koonin E.V."/>
            <person name="Le Gall F."/>
            <person name="Makarova K.S."/>
            <person name="Ostrowski M."/>
            <person name="Oztas S."/>
            <person name="Robert C."/>
            <person name="Rogozin I.B."/>
            <person name="Scanlan D.J."/>
            <person name="Tandeau de Marsac N."/>
            <person name="Weissenbach J."/>
            <person name="Wincker P."/>
            <person name="Wolf Y.I."/>
            <person name="Hess W.R."/>
        </authorList>
    </citation>
    <scope>NUCLEOTIDE SEQUENCE [LARGE SCALE GENOMIC DNA]</scope>
    <source>
        <strain>SARG / CCMP1375 / SS120</strain>
    </source>
</reference>